<organism>
    <name type="scientific">Pseudomonas aeruginosa (strain ATCC 15692 / DSM 22644 / CIP 104116 / JCM 14847 / LMG 12228 / 1C / PRS 101 / PAO1)</name>
    <dbReference type="NCBI Taxonomy" id="208964"/>
    <lineage>
        <taxon>Bacteria</taxon>
        <taxon>Pseudomonadati</taxon>
        <taxon>Pseudomonadota</taxon>
        <taxon>Gammaproteobacteria</taxon>
        <taxon>Pseudomonadales</taxon>
        <taxon>Pseudomonadaceae</taxon>
        <taxon>Pseudomonas</taxon>
    </lineage>
</organism>
<keyword id="KW-0016">Alginate biosynthesis</keyword>
<keyword id="KW-0997">Cell inner membrane</keyword>
<keyword id="KW-1003">Cell membrane</keyword>
<keyword id="KW-0472">Membrane</keyword>
<keyword id="KW-1185">Reference proteome</keyword>
<keyword id="KW-0812">Transmembrane</keyword>
<keyword id="KW-1133">Transmembrane helix</keyword>
<sequence>MFKALIGAAVVVLLAVLSKTRNYYIAGLVPLFPTFALIAHYIVGKGRSLDDLKTTIVFGMWSIIPYFVYLAALYLLVERFRLETSLALAALAWLVAASVLVGLWVRLHA</sequence>
<evidence type="ECO:0000255" key="1"/>
<evidence type="ECO:0000269" key="2">
    <source>
    </source>
</evidence>
<evidence type="ECO:0000305" key="3"/>
<proteinExistence type="predicted"/>
<protein>
    <recommendedName>
        <fullName>Membrane protein GlpM</fullName>
    </recommendedName>
</protein>
<reference key="1">
    <citation type="journal article" date="1995" name="J. Bacteriol.">
        <title>Identification of Pseudomonas aeruginosa glpM, whose gene product is required for efficient alginate biosynthesis from various carbon sources.</title>
        <authorList>
            <person name="Schweizer H.P."/>
            <person name="Po C."/>
            <person name="Bacic M.K."/>
        </authorList>
    </citation>
    <scope>NUCLEOTIDE SEQUENCE [GENOMIC DNA]</scope>
    <scope>DISRUPTION PHENOTYPE</scope>
    <source>
        <strain>CD10</strain>
    </source>
</reference>
<reference key="2">
    <citation type="journal article" date="2000" name="Nature">
        <title>Complete genome sequence of Pseudomonas aeruginosa PAO1, an opportunistic pathogen.</title>
        <authorList>
            <person name="Stover C.K."/>
            <person name="Pham X.-Q.T."/>
            <person name="Erwin A.L."/>
            <person name="Mizoguchi S.D."/>
            <person name="Warrener P."/>
            <person name="Hickey M.J."/>
            <person name="Brinkman F.S.L."/>
            <person name="Hufnagle W.O."/>
            <person name="Kowalik D.J."/>
            <person name="Lagrou M."/>
            <person name="Garber R.L."/>
            <person name="Goltry L."/>
            <person name="Tolentino E."/>
            <person name="Westbrock-Wadman S."/>
            <person name="Yuan Y."/>
            <person name="Brody L.L."/>
            <person name="Coulter S.N."/>
            <person name="Folger K.R."/>
            <person name="Kas A."/>
            <person name="Larbig K."/>
            <person name="Lim R.M."/>
            <person name="Smith K.A."/>
            <person name="Spencer D.H."/>
            <person name="Wong G.K.-S."/>
            <person name="Wu Z."/>
            <person name="Paulsen I.T."/>
            <person name="Reizer J."/>
            <person name="Saier M.H. Jr."/>
            <person name="Hancock R.E.W."/>
            <person name="Lory S."/>
            <person name="Olson M.V."/>
        </authorList>
    </citation>
    <scope>NUCLEOTIDE SEQUENCE [LARGE SCALE GENOMIC DNA]</scope>
    <source>
        <strain>ATCC 15692 / DSM 22644 / CIP 104116 / JCM 14847 / LMG 12228 / 1C / PRS 101 / PAO1</strain>
    </source>
</reference>
<accession>P52112</accession>
<feature type="chain" id="PRO_0000087517" description="Membrane protein GlpM">
    <location>
        <begin position="1"/>
        <end position="109"/>
    </location>
</feature>
<feature type="transmembrane region" description="Helical" evidence="1">
    <location>
        <begin position="24"/>
        <end position="44"/>
    </location>
</feature>
<feature type="transmembrane region" description="Helical" evidence="1">
    <location>
        <begin position="56"/>
        <end position="76"/>
    </location>
</feature>
<feature type="transmembrane region" description="Helical" evidence="1">
    <location>
        <begin position="85"/>
        <end position="105"/>
    </location>
</feature>
<comment type="function">
    <text>Could play a role in alginate biosynthesis. Overexpression may be lethal.</text>
</comment>
<comment type="subcellular location">
    <subcellularLocation>
        <location evidence="3">Cell inner membrane</location>
        <topology evidence="3">Multi-pass membrane protein</topology>
    </subcellularLocation>
</comment>
<comment type="disruption phenotype">
    <text evidence="2">Mutants are pleiotropically defective in alginate biosynthesis from various carbon sources.</text>
</comment>
<comment type="similarity">
    <text evidence="3">To E.coli YdgC.</text>
</comment>
<gene>
    <name type="primary">glpM</name>
    <name type="ordered locus">PA3585</name>
</gene>
<name>GLPM_PSEAE</name>
<dbReference type="EMBL" id="L06231">
    <property type="protein sequence ID" value="AAA81585.1"/>
    <property type="molecule type" value="Genomic_DNA"/>
</dbReference>
<dbReference type="EMBL" id="AE004091">
    <property type="protein sequence ID" value="AAG06973.1"/>
    <property type="molecule type" value="Genomic_DNA"/>
</dbReference>
<dbReference type="PIR" id="C83197">
    <property type="entry name" value="C83197"/>
</dbReference>
<dbReference type="RefSeq" id="NP_252275.1">
    <property type="nucleotide sequence ID" value="NC_002516.2"/>
</dbReference>
<dbReference type="RefSeq" id="WP_003119370.1">
    <property type="nucleotide sequence ID" value="NZ_QZGE01000001.1"/>
</dbReference>
<dbReference type="FunCoup" id="P52112">
    <property type="interactions" value="21"/>
</dbReference>
<dbReference type="STRING" id="208964.PA3585"/>
<dbReference type="TCDB" id="9.B.72.1.1">
    <property type="family name" value="the 4 tms glpm (glpm) family"/>
</dbReference>
<dbReference type="PaxDb" id="208964-PA3585"/>
<dbReference type="GeneID" id="880180"/>
<dbReference type="KEGG" id="pae:PA3585"/>
<dbReference type="PATRIC" id="fig|208964.12.peg.3752"/>
<dbReference type="PseudoCAP" id="PA3585"/>
<dbReference type="HOGENOM" id="CLU_140962_0_0_6"/>
<dbReference type="InParanoid" id="P52112"/>
<dbReference type="OrthoDB" id="6053681at2"/>
<dbReference type="BioCyc" id="PAER208964:G1FZ6-3654-MONOMER"/>
<dbReference type="Proteomes" id="UP000002438">
    <property type="component" value="Chromosome"/>
</dbReference>
<dbReference type="GO" id="GO:0005886">
    <property type="term" value="C:plasma membrane"/>
    <property type="evidence" value="ECO:0007669"/>
    <property type="project" value="UniProtKB-SubCell"/>
</dbReference>
<dbReference type="GO" id="GO:0042121">
    <property type="term" value="P:alginic acid biosynthetic process"/>
    <property type="evidence" value="ECO:0007669"/>
    <property type="project" value="UniProtKB-KW"/>
</dbReference>
<dbReference type="InterPro" id="IPR009707">
    <property type="entry name" value="GlpM/YdgC"/>
</dbReference>
<dbReference type="Pfam" id="PF06942">
    <property type="entry name" value="GlpM"/>
    <property type="match status" value="1"/>
</dbReference>